<reference key="1">
    <citation type="submission" date="2006-01" db="EMBL/GenBank/DDBJ databases">
        <authorList>
            <consortium name="NIH - Mammalian Gene Collection (MGC) project"/>
        </authorList>
    </citation>
    <scope>NUCLEOTIDE SEQUENCE [LARGE SCALE MRNA]</scope>
    <source>
        <strain>Hereford</strain>
        <tissue>Testis</tissue>
    </source>
</reference>
<organism>
    <name type="scientific">Bos taurus</name>
    <name type="common">Bovine</name>
    <dbReference type="NCBI Taxonomy" id="9913"/>
    <lineage>
        <taxon>Eukaryota</taxon>
        <taxon>Metazoa</taxon>
        <taxon>Chordata</taxon>
        <taxon>Craniata</taxon>
        <taxon>Vertebrata</taxon>
        <taxon>Euteleostomi</taxon>
        <taxon>Mammalia</taxon>
        <taxon>Eutheria</taxon>
        <taxon>Laurasiatheria</taxon>
        <taxon>Artiodactyla</taxon>
        <taxon>Ruminantia</taxon>
        <taxon>Pecora</taxon>
        <taxon>Bovidae</taxon>
        <taxon>Bovinae</taxon>
        <taxon>Bos</taxon>
    </lineage>
</organism>
<protein>
    <recommendedName>
        <fullName>Radial spoke head protein 9 homolog</fullName>
    </recommendedName>
</protein>
<evidence type="ECO:0000250" key="1">
    <source>
        <dbReference type="UniProtKB" id="Q5TYW6"/>
    </source>
</evidence>
<evidence type="ECO:0000250" key="2">
    <source>
        <dbReference type="UniProtKB" id="Q9D9V4"/>
    </source>
</evidence>
<evidence type="ECO:0000250" key="3">
    <source>
        <dbReference type="UniProtKB" id="Q9H1X1"/>
    </source>
</evidence>
<evidence type="ECO:0000305" key="4"/>
<gene>
    <name type="primary">RSPH9</name>
</gene>
<keyword id="KW-0966">Cell projection</keyword>
<keyword id="KW-0969">Cilium</keyword>
<keyword id="KW-0970">Cilium biogenesis/degradation</keyword>
<keyword id="KW-0963">Cytoplasm</keyword>
<keyword id="KW-0206">Cytoskeleton</keyword>
<keyword id="KW-0282">Flagellum</keyword>
<keyword id="KW-1185">Reference proteome</keyword>
<comment type="function">
    <text evidence="1 2">Functions as part of axonemal radial spoke complexes that play an important part in the motility of sperm and cilia (By similarity). Essential for both the radial spoke head assembly and the central pair microtubule stability in ependymal motile cilia (By similarity). Required for motility of olfactory and neural cilia and for the structural integrity of ciliary axonemes in both 9+0 and 9+2 motile cilia (By similarity).</text>
</comment>
<comment type="subunit">
    <text evidence="2 3">Component of the axonemal radial spoke 1 (RS1) and 2 (RS2) complexes, at least composed of spoke head proteins RSPH1, RSPH3, RSPH9 and the cilia-specific component RSPH4A or sperm-specific component RSPH6A, spoke stalk proteins RSPH14, DNAJB13, DYDC1, ROPN1L and NME5, and the RS1 complex-specific anchor protein IQUB (By similarity). Interacts with IQUB (By similarity). Interacts with RSPH3B (By similarity). Interacts with RSPH4A (By similarity). Interacts with RSPH6A (By similarity). Interacts with CFAP61 (By similarity). Interacts with LRRC23 (By similarity).</text>
</comment>
<comment type="subcellular location">
    <subcellularLocation>
        <location evidence="2">Cytoplasm</location>
        <location evidence="2">Cytoskeleton</location>
        <location evidence="2">Cilium axoneme</location>
    </subcellularLocation>
    <subcellularLocation>
        <location evidence="2">Cytoplasm</location>
        <location evidence="2">Cytoskeleton</location>
        <location evidence="2">Flagellum axoneme</location>
    </subcellularLocation>
    <subcellularLocation>
        <location evidence="1">Cell projection</location>
        <location evidence="1">Kinocilium</location>
    </subcellularLocation>
</comment>
<comment type="similarity">
    <text evidence="4">Belongs to the flagellar radial spoke RSP9 family.</text>
</comment>
<feature type="chain" id="PRO_0000265096" description="Radial spoke head protein 9 homolog">
    <location>
        <begin position="1"/>
        <end position="276"/>
    </location>
</feature>
<dbReference type="EMBL" id="BC112503">
    <property type="protein sequence ID" value="AAI12504.1"/>
    <property type="molecule type" value="mRNA"/>
</dbReference>
<dbReference type="RefSeq" id="NP_001039732.1">
    <property type="nucleotide sequence ID" value="NM_001046267.1"/>
</dbReference>
<dbReference type="EMDB" id="EMD-50664"/>
<dbReference type="SMR" id="Q2KIU7"/>
<dbReference type="FunCoup" id="Q2KIU7">
    <property type="interactions" value="333"/>
</dbReference>
<dbReference type="STRING" id="9913.ENSBTAP00000012563"/>
<dbReference type="PaxDb" id="9913-ENSBTAP00000012563"/>
<dbReference type="Ensembl" id="ENSBTAT00000012563.4">
    <property type="protein sequence ID" value="ENSBTAP00000012563.3"/>
    <property type="gene ID" value="ENSBTAG00000009549.5"/>
</dbReference>
<dbReference type="GeneID" id="523327"/>
<dbReference type="KEGG" id="bta:523327"/>
<dbReference type="CTD" id="221421"/>
<dbReference type="VEuPathDB" id="HostDB:ENSBTAG00000009549"/>
<dbReference type="VGNC" id="VGNC:34187">
    <property type="gene designation" value="RSPH9"/>
</dbReference>
<dbReference type="eggNOG" id="ENOG502QR99">
    <property type="taxonomic scope" value="Eukaryota"/>
</dbReference>
<dbReference type="GeneTree" id="ENSGT00390000018686"/>
<dbReference type="HOGENOM" id="CLU_068343_1_0_1"/>
<dbReference type="InParanoid" id="Q2KIU7"/>
<dbReference type="OMA" id="TFYHVPN"/>
<dbReference type="OrthoDB" id="10258956at2759"/>
<dbReference type="TreeFam" id="TF323644"/>
<dbReference type="Proteomes" id="UP000009136">
    <property type="component" value="Chromosome 23"/>
</dbReference>
<dbReference type="Bgee" id="ENSBTAG00000009549">
    <property type="expression patterns" value="Expressed in spermatocyte and 105 other cell types or tissues"/>
</dbReference>
<dbReference type="GO" id="GO:0097729">
    <property type="term" value="C:9+2 motile cilium"/>
    <property type="evidence" value="ECO:0000250"/>
    <property type="project" value="UniProtKB"/>
</dbReference>
<dbReference type="GO" id="GO:0005930">
    <property type="term" value="C:axoneme"/>
    <property type="evidence" value="ECO:0000318"/>
    <property type="project" value="GO_Central"/>
</dbReference>
<dbReference type="GO" id="GO:0060091">
    <property type="term" value="C:kinocilium"/>
    <property type="evidence" value="ECO:0007669"/>
    <property type="project" value="UniProtKB-SubCell"/>
</dbReference>
<dbReference type="GO" id="GO:0001535">
    <property type="term" value="C:radial spoke head"/>
    <property type="evidence" value="ECO:0000250"/>
    <property type="project" value="UniProtKB"/>
</dbReference>
<dbReference type="GO" id="GO:0036126">
    <property type="term" value="C:sperm flagellum"/>
    <property type="evidence" value="ECO:0000250"/>
    <property type="project" value="UniProtKB"/>
</dbReference>
<dbReference type="GO" id="GO:0035082">
    <property type="term" value="P:axoneme assembly"/>
    <property type="evidence" value="ECO:0000318"/>
    <property type="project" value="GO_Central"/>
</dbReference>
<dbReference type="GO" id="GO:0060294">
    <property type="term" value="P:cilium movement involved in cell motility"/>
    <property type="evidence" value="ECO:0000318"/>
    <property type="project" value="GO_Central"/>
</dbReference>
<dbReference type="GO" id="GO:0044458">
    <property type="term" value="P:motile cilium assembly"/>
    <property type="evidence" value="ECO:0000318"/>
    <property type="project" value="GO_Central"/>
</dbReference>
<dbReference type="InterPro" id="IPR055316">
    <property type="entry name" value="RSP9"/>
</dbReference>
<dbReference type="PANTHER" id="PTHR22069">
    <property type="entry name" value="MITOCHONDRIAL RIBOSOMAL PROTEIN S18"/>
    <property type="match status" value="1"/>
</dbReference>
<dbReference type="PANTHER" id="PTHR22069:SF0">
    <property type="entry name" value="RADIAL SPOKE HEAD PROTEIN 9 HOMOLOG"/>
    <property type="match status" value="1"/>
</dbReference>
<sequence>MDAESLLLALELASGSGQGLSPDRRASLLTSLMLVKRDYRFDRVLFWGRILGLVADYYIAQGVSEDQLAPRKTLYSLNCMEWSLLPPATKEMETQTSVVKGRFMGDPSHEYEHTELQKVNEGEKVFEEEVVVQIKEETRLVSVIDQIDKAVAVIPRGALFKTPFGPINVNRTFEGLSLSEAKKLSSYFHFREPVELKNKTLLEKAELDPSLDFMDSLEHDIPKGSWSVQMERGNALVVLRSLLWPGLTFYHAPRTKNYGYIYVGTGEKNLDLPFML</sequence>
<name>RSPH9_BOVIN</name>
<accession>Q2KIU7</accession>
<proteinExistence type="evidence at transcript level"/>